<reference key="1">
    <citation type="journal article" date="2003" name="DNA Res.">
        <title>Complete genome structure of Gloeobacter violaceus PCC 7421, a cyanobacterium that lacks thylakoids.</title>
        <authorList>
            <person name="Nakamura Y."/>
            <person name="Kaneko T."/>
            <person name="Sato S."/>
            <person name="Mimuro M."/>
            <person name="Miyashita H."/>
            <person name="Tsuchiya T."/>
            <person name="Sasamoto S."/>
            <person name="Watanabe A."/>
            <person name="Kawashima K."/>
            <person name="Kishida Y."/>
            <person name="Kiyokawa C."/>
            <person name="Kohara M."/>
            <person name="Matsumoto M."/>
            <person name="Matsuno A."/>
            <person name="Nakazaki N."/>
            <person name="Shimpo S."/>
            <person name="Takeuchi C."/>
            <person name="Yamada M."/>
            <person name="Tabata S."/>
        </authorList>
    </citation>
    <scope>NUCLEOTIDE SEQUENCE [LARGE SCALE GENOMIC DNA]</scope>
    <source>
        <strain>ATCC 29082 / PCC 7421</strain>
    </source>
</reference>
<dbReference type="EC" id="7.1.2.2" evidence="2"/>
<dbReference type="EMBL" id="BA000045">
    <property type="protein sequence ID" value="BAC90846.1"/>
    <property type="molecule type" value="Genomic_DNA"/>
</dbReference>
<dbReference type="RefSeq" id="NP_925851.1">
    <property type="nucleotide sequence ID" value="NC_005125.1"/>
</dbReference>
<dbReference type="RefSeq" id="WP_011142899.1">
    <property type="nucleotide sequence ID" value="NC_005125.1"/>
</dbReference>
<dbReference type="SMR" id="Q7NCS3"/>
<dbReference type="FunCoup" id="Q7NCS3">
    <property type="interactions" value="307"/>
</dbReference>
<dbReference type="STRING" id="251221.gene:10760409"/>
<dbReference type="EnsemblBacteria" id="BAC90846">
    <property type="protein sequence ID" value="BAC90846"/>
    <property type="gene ID" value="BAC90846"/>
</dbReference>
<dbReference type="KEGG" id="gvi:gll2905"/>
<dbReference type="PATRIC" id="fig|251221.4.peg.2935"/>
<dbReference type="eggNOG" id="COG0056">
    <property type="taxonomic scope" value="Bacteria"/>
</dbReference>
<dbReference type="HOGENOM" id="CLU_010091_2_1_3"/>
<dbReference type="InParanoid" id="Q7NCS3"/>
<dbReference type="OrthoDB" id="9803053at2"/>
<dbReference type="PhylomeDB" id="Q7NCS3"/>
<dbReference type="Proteomes" id="UP000000557">
    <property type="component" value="Chromosome"/>
</dbReference>
<dbReference type="GO" id="GO:0005886">
    <property type="term" value="C:plasma membrane"/>
    <property type="evidence" value="ECO:0007669"/>
    <property type="project" value="UniProtKB-SubCell"/>
</dbReference>
<dbReference type="GO" id="GO:0045259">
    <property type="term" value="C:proton-transporting ATP synthase complex"/>
    <property type="evidence" value="ECO:0007669"/>
    <property type="project" value="UniProtKB-KW"/>
</dbReference>
<dbReference type="GO" id="GO:0043531">
    <property type="term" value="F:ADP binding"/>
    <property type="evidence" value="ECO:0000318"/>
    <property type="project" value="GO_Central"/>
</dbReference>
<dbReference type="GO" id="GO:0005524">
    <property type="term" value="F:ATP binding"/>
    <property type="evidence" value="ECO:0000318"/>
    <property type="project" value="GO_Central"/>
</dbReference>
<dbReference type="GO" id="GO:0046933">
    <property type="term" value="F:proton-transporting ATP synthase activity, rotational mechanism"/>
    <property type="evidence" value="ECO:0007669"/>
    <property type="project" value="UniProtKB-UniRule"/>
</dbReference>
<dbReference type="GO" id="GO:0015986">
    <property type="term" value="P:proton motive force-driven ATP synthesis"/>
    <property type="evidence" value="ECO:0000318"/>
    <property type="project" value="GO_Central"/>
</dbReference>
<dbReference type="CDD" id="cd18113">
    <property type="entry name" value="ATP-synt_F1_alpha_C"/>
    <property type="match status" value="1"/>
</dbReference>
<dbReference type="CDD" id="cd18116">
    <property type="entry name" value="ATP-synt_F1_alpha_N"/>
    <property type="match status" value="1"/>
</dbReference>
<dbReference type="CDD" id="cd01132">
    <property type="entry name" value="F1-ATPase_alpha_CD"/>
    <property type="match status" value="1"/>
</dbReference>
<dbReference type="FunFam" id="1.20.150.20:FF:000001">
    <property type="entry name" value="ATP synthase subunit alpha"/>
    <property type="match status" value="1"/>
</dbReference>
<dbReference type="FunFam" id="2.40.30.20:FF:000001">
    <property type="entry name" value="ATP synthase subunit alpha"/>
    <property type="match status" value="1"/>
</dbReference>
<dbReference type="FunFam" id="3.40.50.300:FF:000002">
    <property type="entry name" value="ATP synthase subunit alpha"/>
    <property type="match status" value="1"/>
</dbReference>
<dbReference type="Gene3D" id="2.40.30.20">
    <property type="match status" value="1"/>
</dbReference>
<dbReference type="Gene3D" id="1.20.150.20">
    <property type="entry name" value="ATP synthase alpha/beta chain, C-terminal domain"/>
    <property type="match status" value="1"/>
</dbReference>
<dbReference type="Gene3D" id="3.40.50.300">
    <property type="entry name" value="P-loop containing nucleotide triphosphate hydrolases"/>
    <property type="match status" value="1"/>
</dbReference>
<dbReference type="HAMAP" id="MF_01346">
    <property type="entry name" value="ATP_synth_alpha_bact"/>
    <property type="match status" value="1"/>
</dbReference>
<dbReference type="InterPro" id="IPR023366">
    <property type="entry name" value="ATP_synth_asu-like_sf"/>
</dbReference>
<dbReference type="InterPro" id="IPR000793">
    <property type="entry name" value="ATP_synth_asu_C"/>
</dbReference>
<dbReference type="InterPro" id="IPR038376">
    <property type="entry name" value="ATP_synth_asu_C_sf"/>
</dbReference>
<dbReference type="InterPro" id="IPR033732">
    <property type="entry name" value="ATP_synth_F1_a_nt-bd_dom"/>
</dbReference>
<dbReference type="InterPro" id="IPR005294">
    <property type="entry name" value="ATP_synth_F1_asu"/>
</dbReference>
<dbReference type="InterPro" id="IPR020003">
    <property type="entry name" value="ATPase_a/bsu_AS"/>
</dbReference>
<dbReference type="InterPro" id="IPR004100">
    <property type="entry name" value="ATPase_F1/V1/A1_a/bsu_N"/>
</dbReference>
<dbReference type="InterPro" id="IPR036121">
    <property type="entry name" value="ATPase_F1/V1/A1_a/bsu_N_sf"/>
</dbReference>
<dbReference type="InterPro" id="IPR000194">
    <property type="entry name" value="ATPase_F1/V1/A1_a/bsu_nucl-bd"/>
</dbReference>
<dbReference type="InterPro" id="IPR027417">
    <property type="entry name" value="P-loop_NTPase"/>
</dbReference>
<dbReference type="NCBIfam" id="TIGR00962">
    <property type="entry name" value="atpA"/>
    <property type="match status" value="1"/>
</dbReference>
<dbReference type="NCBIfam" id="NF009884">
    <property type="entry name" value="PRK13343.1"/>
    <property type="match status" value="1"/>
</dbReference>
<dbReference type="PANTHER" id="PTHR48082">
    <property type="entry name" value="ATP SYNTHASE SUBUNIT ALPHA, MITOCHONDRIAL"/>
    <property type="match status" value="1"/>
</dbReference>
<dbReference type="PANTHER" id="PTHR48082:SF2">
    <property type="entry name" value="ATP SYNTHASE SUBUNIT ALPHA, MITOCHONDRIAL"/>
    <property type="match status" value="1"/>
</dbReference>
<dbReference type="Pfam" id="PF00006">
    <property type="entry name" value="ATP-synt_ab"/>
    <property type="match status" value="1"/>
</dbReference>
<dbReference type="Pfam" id="PF00306">
    <property type="entry name" value="ATP-synt_ab_C"/>
    <property type="match status" value="1"/>
</dbReference>
<dbReference type="Pfam" id="PF02874">
    <property type="entry name" value="ATP-synt_ab_N"/>
    <property type="match status" value="1"/>
</dbReference>
<dbReference type="PIRSF" id="PIRSF039088">
    <property type="entry name" value="F_ATPase_subunit_alpha"/>
    <property type="match status" value="1"/>
</dbReference>
<dbReference type="SUPFAM" id="SSF47917">
    <property type="entry name" value="C-terminal domain of alpha and beta subunits of F1 ATP synthase"/>
    <property type="match status" value="1"/>
</dbReference>
<dbReference type="SUPFAM" id="SSF50615">
    <property type="entry name" value="N-terminal domain of alpha and beta subunits of F1 ATP synthase"/>
    <property type="match status" value="1"/>
</dbReference>
<dbReference type="SUPFAM" id="SSF52540">
    <property type="entry name" value="P-loop containing nucleoside triphosphate hydrolases"/>
    <property type="match status" value="1"/>
</dbReference>
<dbReference type="PROSITE" id="PS00152">
    <property type="entry name" value="ATPASE_ALPHA_BETA"/>
    <property type="match status" value="1"/>
</dbReference>
<proteinExistence type="inferred from homology"/>
<gene>
    <name evidence="2" type="primary">atpA</name>
    <name type="ordered locus">gll2905</name>
</gene>
<evidence type="ECO:0000250" key="1"/>
<evidence type="ECO:0000255" key="2">
    <source>
        <dbReference type="HAMAP-Rule" id="MF_01346"/>
    </source>
</evidence>
<comment type="function">
    <text evidence="2">Produces ATP from ADP in the presence of a proton gradient across the membrane. The alpha chain is a regulatory subunit.</text>
</comment>
<comment type="catalytic activity">
    <reaction evidence="2">
        <text>ATP + H2O + 4 H(+)(in) = ADP + phosphate + 5 H(+)(out)</text>
        <dbReference type="Rhea" id="RHEA:57720"/>
        <dbReference type="ChEBI" id="CHEBI:15377"/>
        <dbReference type="ChEBI" id="CHEBI:15378"/>
        <dbReference type="ChEBI" id="CHEBI:30616"/>
        <dbReference type="ChEBI" id="CHEBI:43474"/>
        <dbReference type="ChEBI" id="CHEBI:456216"/>
        <dbReference type="EC" id="7.1.2.2"/>
    </reaction>
</comment>
<comment type="subunit">
    <text evidence="1">F-type ATPases have 2 components, CF(1) - the catalytic core - and CF(0) - the membrane proton channel. CF(1) has five subunits: alpha(3), beta(3), gamma(1), delta(1), epsilon(1). CF(0) has four main subunits: a(1), b(1), b'(1) and c(9-12) (By similarity).</text>
</comment>
<comment type="subcellular location">
    <subcellularLocation>
        <location evidence="2">Cell inner membrane</location>
        <topology evidence="2">Peripheral membrane protein</topology>
    </subcellularLocation>
</comment>
<comment type="similarity">
    <text evidence="2">Belongs to the ATPase alpha/beta chains family.</text>
</comment>
<accession>Q7NCS3</accession>
<sequence>MFTIRPDEISSVIRDQIQKYNTELQVTNVGTVLQVGDGIARVYGLEKCMASELLEFEDGTIGIALNLEEDNVGAVLMGAGRTIEEGSTVRATGRIASIPVGPAFLGRVVNALAIPIDGKGDIVGSETRLLESPAPGIIKRKSVYEPLATGITAIDAMIPIGRGQRELIIGDRQTGKTTIAIDTILNQKGKGVVCVYVAIGQKASTVAQIVEVLRSRGALEYTIIVAANANEPAALQYLAPYTGCTLGEYVMYNGLTLPGSDKKINAALLVYDDLSKQAVAYRQMSLLLRRPPGREAYPGDVFYLHSRLLERAAKLSPDLGEGSLTALPIIETQAGDVSAYIPTNVISITDGQIFLDSGLFNSGLRPAIDAGISVSRVGGAAQTKAMKKVAGKLRLDLAQFSELEAFSQFASDLDKATQAQLARGLRLREILKQPQYSPLSVAQQVAIIYAATNGYLDDIDVKGIQPFKQQFLNYLDSSVSEYGQEIETTKALTDKAVDLLKKALNDFKTTVKK</sequence>
<name>ATPA_GLOVI</name>
<organism>
    <name type="scientific">Gloeobacter violaceus (strain ATCC 29082 / PCC 7421)</name>
    <dbReference type="NCBI Taxonomy" id="251221"/>
    <lineage>
        <taxon>Bacteria</taxon>
        <taxon>Bacillati</taxon>
        <taxon>Cyanobacteriota</taxon>
        <taxon>Cyanophyceae</taxon>
        <taxon>Gloeobacterales</taxon>
        <taxon>Gloeobacteraceae</taxon>
        <taxon>Gloeobacter</taxon>
    </lineage>
</organism>
<feature type="chain" id="PRO_0000238256" description="ATP synthase subunit alpha">
    <location>
        <begin position="1"/>
        <end position="513"/>
    </location>
</feature>
<feature type="binding site" evidence="2">
    <location>
        <begin position="170"/>
        <end position="177"/>
    </location>
    <ligand>
        <name>ATP</name>
        <dbReference type="ChEBI" id="CHEBI:30616"/>
    </ligand>
</feature>
<feature type="site" description="Required for activity" evidence="2">
    <location>
        <position position="373"/>
    </location>
</feature>
<protein>
    <recommendedName>
        <fullName evidence="2">ATP synthase subunit alpha</fullName>
        <ecNumber evidence="2">7.1.2.2</ecNumber>
    </recommendedName>
    <alternativeName>
        <fullName evidence="2">ATP synthase F1 sector subunit alpha</fullName>
    </alternativeName>
    <alternativeName>
        <fullName evidence="2">F-ATPase subunit alpha</fullName>
    </alternativeName>
</protein>
<keyword id="KW-0066">ATP synthesis</keyword>
<keyword id="KW-0067">ATP-binding</keyword>
<keyword id="KW-0997">Cell inner membrane</keyword>
<keyword id="KW-1003">Cell membrane</keyword>
<keyword id="KW-0139">CF(1)</keyword>
<keyword id="KW-0375">Hydrogen ion transport</keyword>
<keyword id="KW-0406">Ion transport</keyword>
<keyword id="KW-0472">Membrane</keyword>
<keyword id="KW-0547">Nucleotide-binding</keyword>
<keyword id="KW-1185">Reference proteome</keyword>
<keyword id="KW-1278">Translocase</keyword>
<keyword id="KW-0813">Transport</keyword>